<sequence length="232" mass="24394">MSACQSPIIVALDFPTREAALALADQLDPKLCRVKVGKELFTSCAAGIVETLRGKGFEVFLDLKFHDIPNTTAMAVKAAAEMGVWMVNVHCSGGLRMMAACRETLEAFSGPRPLLIGVTVLTSMEREDLAGIGLDIEPQEQVLRLAALAQKAGMDGLVCSAQEAPALKAAHPGLQLVTPGIRPAGSAQDDQRRILTPRQALDAGSDYLVIGRPISQAADPAKALAAIVAELG</sequence>
<keyword id="KW-0210">Decarboxylase</keyword>
<keyword id="KW-0456">Lyase</keyword>
<keyword id="KW-0665">Pyrimidine biosynthesis</keyword>
<keyword id="KW-1185">Reference proteome</keyword>
<evidence type="ECO:0000255" key="1">
    <source>
        <dbReference type="HAMAP-Rule" id="MF_01200"/>
    </source>
</evidence>
<evidence type="ECO:0000305" key="2"/>
<protein>
    <recommendedName>
        <fullName evidence="1">Orotidine 5'-phosphate decarboxylase</fullName>
        <ecNumber evidence="1">4.1.1.23</ecNumber>
    </recommendedName>
    <alternativeName>
        <fullName evidence="1">OMP decarboxylase</fullName>
        <shortName evidence="1">OMPDCase</shortName>
        <shortName evidence="1">OMPdecase</shortName>
    </alternativeName>
</protein>
<gene>
    <name evidence="1" type="primary">pyrF</name>
    <name type="ordered locus">PA2876</name>
</gene>
<organism>
    <name type="scientific">Pseudomonas aeruginosa (strain ATCC 15692 / DSM 22644 / CIP 104116 / JCM 14847 / LMG 12228 / 1C / PRS 101 / PAO1)</name>
    <dbReference type="NCBI Taxonomy" id="208964"/>
    <lineage>
        <taxon>Bacteria</taxon>
        <taxon>Pseudomonadati</taxon>
        <taxon>Pseudomonadota</taxon>
        <taxon>Gammaproteobacteria</taxon>
        <taxon>Pseudomonadales</taxon>
        <taxon>Pseudomonadaceae</taxon>
        <taxon>Pseudomonas</taxon>
    </lineage>
</organism>
<comment type="function">
    <text>Catalyzes the decarboxylation of orotidine 5'-monophosphate (OMP) to uridine 5'-monophosphate (UMP).</text>
</comment>
<comment type="catalytic activity">
    <reaction evidence="1">
        <text>orotidine 5'-phosphate + H(+) = UMP + CO2</text>
        <dbReference type="Rhea" id="RHEA:11596"/>
        <dbReference type="ChEBI" id="CHEBI:15378"/>
        <dbReference type="ChEBI" id="CHEBI:16526"/>
        <dbReference type="ChEBI" id="CHEBI:57538"/>
        <dbReference type="ChEBI" id="CHEBI:57865"/>
        <dbReference type="EC" id="4.1.1.23"/>
    </reaction>
</comment>
<comment type="pathway">
    <text evidence="1">Pyrimidine metabolism; UMP biosynthesis via de novo pathway; UMP from orotate: step 2/2.</text>
</comment>
<comment type="subunit">
    <text>Homodimer.</text>
</comment>
<comment type="similarity">
    <text evidence="1">Belongs to the OMP decarboxylase family. Type 1 subfamily.</text>
</comment>
<accession>Q59654</accession>
<proteinExistence type="evidence at protein level"/>
<reference key="1">
    <citation type="journal article" date="1994" name="Curr. Microbiol.">
        <title>Orotidine-5'-monophosphate decarboxylase from Pseudomonas aeruginosa PAO1: cloning, overexpression, and enzyme characterization.</title>
        <authorList>
            <person name="Strych U."/>
            <person name="Wohlfarth S."/>
            <person name="Winkler U.K."/>
        </authorList>
    </citation>
    <scope>NUCLEOTIDE SEQUENCE [GENOMIC DNA]</scope>
    <scope>CHARACTERIZATION</scope>
    <source>
        <strain>ATCC 15692 / DSM 22644 / CIP 104116 / JCM 14847 / LMG 12228 / 1C / PRS 101 / PAO1</strain>
    </source>
</reference>
<reference key="2">
    <citation type="journal article" date="2000" name="Nature">
        <title>Complete genome sequence of Pseudomonas aeruginosa PAO1, an opportunistic pathogen.</title>
        <authorList>
            <person name="Stover C.K."/>
            <person name="Pham X.-Q.T."/>
            <person name="Erwin A.L."/>
            <person name="Mizoguchi S.D."/>
            <person name="Warrener P."/>
            <person name="Hickey M.J."/>
            <person name="Brinkman F.S.L."/>
            <person name="Hufnagle W.O."/>
            <person name="Kowalik D.J."/>
            <person name="Lagrou M."/>
            <person name="Garber R.L."/>
            <person name="Goltry L."/>
            <person name="Tolentino E."/>
            <person name="Westbrock-Wadman S."/>
            <person name="Yuan Y."/>
            <person name="Brody L.L."/>
            <person name="Coulter S.N."/>
            <person name="Folger K.R."/>
            <person name="Kas A."/>
            <person name="Larbig K."/>
            <person name="Lim R.M."/>
            <person name="Smith K.A."/>
            <person name="Spencer D.H."/>
            <person name="Wong G.K.-S."/>
            <person name="Wu Z."/>
            <person name="Paulsen I.T."/>
            <person name="Reizer J."/>
            <person name="Saier M.H. Jr."/>
            <person name="Hancock R.E.W."/>
            <person name="Lory S."/>
            <person name="Olson M.V."/>
        </authorList>
    </citation>
    <scope>NUCLEOTIDE SEQUENCE [LARGE SCALE GENOMIC DNA]</scope>
    <source>
        <strain>ATCC 15692 / DSM 22644 / CIP 104116 / JCM 14847 / LMG 12228 / 1C / PRS 101 / PAO1</strain>
    </source>
</reference>
<name>PYRF_PSEAE</name>
<dbReference type="EC" id="4.1.1.23" evidence="1"/>
<dbReference type="EMBL" id="X65613">
    <property type="protein sequence ID" value="CAA46564.1"/>
    <property type="molecule type" value="Genomic_DNA"/>
</dbReference>
<dbReference type="EMBL" id="AE004091">
    <property type="protein sequence ID" value="AAG06264.1"/>
    <property type="molecule type" value="Genomic_DNA"/>
</dbReference>
<dbReference type="PIR" id="B83285">
    <property type="entry name" value="B83285"/>
</dbReference>
<dbReference type="PIR" id="S43188">
    <property type="entry name" value="S43188"/>
</dbReference>
<dbReference type="RefSeq" id="NP_251566.1">
    <property type="nucleotide sequence ID" value="NC_002516.2"/>
</dbReference>
<dbReference type="RefSeq" id="WP_003090975.1">
    <property type="nucleotide sequence ID" value="NZ_QZGE01000011.1"/>
</dbReference>
<dbReference type="SMR" id="Q59654"/>
<dbReference type="FunCoup" id="Q59654">
    <property type="interactions" value="458"/>
</dbReference>
<dbReference type="STRING" id="208964.PA2876"/>
<dbReference type="PaxDb" id="208964-PA2876"/>
<dbReference type="DNASU" id="882585"/>
<dbReference type="GeneID" id="882585"/>
<dbReference type="KEGG" id="pae:PA2876"/>
<dbReference type="PATRIC" id="fig|208964.12.peg.3017"/>
<dbReference type="PseudoCAP" id="PA2876"/>
<dbReference type="HOGENOM" id="CLU_067069_0_0_6"/>
<dbReference type="InParanoid" id="Q59654"/>
<dbReference type="OrthoDB" id="9806203at2"/>
<dbReference type="PhylomeDB" id="Q59654"/>
<dbReference type="BioCyc" id="PAER208964:G1FZ6-2926-MONOMER"/>
<dbReference type="UniPathway" id="UPA00070">
    <property type="reaction ID" value="UER00120"/>
</dbReference>
<dbReference type="Proteomes" id="UP000002438">
    <property type="component" value="Chromosome"/>
</dbReference>
<dbReference type="GO" id="GO:0005829">
    <property type="term" value="C:cytosol"/>
    <property type="evidence" value="ECO:0000318"/>
    <property type="project" value="GO_Central"/>
</dbReference>
<dbReference type="GO" id="GO:0004590">
    <property type="term" value="F:orotidine-5'-phosphate decarboxylase activity"/>
    <property type="evidence" value="ECO:0000318"/>
    <property type="project" value="GO_Central"/>
</dbReference>
<dbReference type="GO" id="GO:0006207">
    <property type="term" value="P:'de novo' pyrimidine nucleobase biosynthetic process"/>
    <property type="evidence" value="ECO:0000318"/>
    <property type="project" value="GO_Central"/>
</dbReference>
<dbReference type="GO" id="GO:0044205">
    <property type="term" value="P:'de novo' UMP biosynthetic process"/>
    <property type="evidence" value="ECO:0007669"/>
    <property type="project" value="UniProtKB-UniRule"/>
</dbReference>
<dbReference type="CDD" id="cd04725">
    <property type="entry name" value="OMP_decarboxylase_like"/>
    <property type="match status" value="1"/>
</dbReference>
<dbReference type="FunFam" id="3.20.20.70:FF:000015">
    <property type="entry name" value="Orotidine 5'-phosphate decarboxylase"/>
    <property type="match status" value="1"/>
</dbReference>
<dbReference type="Gene3D" id="3.20.20.70">
    <property type="entry name" value="Aldolase class I"/>
    <property type="match status" value="1"/>
</dbReference>
<dbReference type="HAMAP" id="MF_01200_B">
    <property type="entry name" value="OMPdecase_type1_B"/>
    <property type="match status" value="1"/>
</dbReference>
<dbReference type="InterPro" id="IPR013785">
    <property type="entry name" value="Aldolase_TIM"/>
</dbReference>
<dbReference type="InterPro" id="IPR014732">
    <property type="entry name" value="OMPdecase"/>
</dbReference>
<dbReference type="InterPro" id="IPR018089">
    <property type="entry name" value="OMPdecase_AS"/>
</dbReference>
<dbReference type="InterPro" id="IPR047596">
    <property type="entry name" value="OMPdecase_bac"/>
</dbReference>
<dbReference type="InterPro" id="IPR001754">
    <property type="entry name" value="OMPdeCOase_dom"/>
</dbReference>
<dbReference type="InterPro" id="IPR011060">
    <property type="entry name" value="RibuloseP-bd_barrel"/>
</dbReference>
<dbReference type="NCBIfam" id="NF001273">
    <property type="entry name" value="PRK00230.1"/>
    <property type="match status" value="1"/>
</dbReference>
<dbReference type="NCBIfam" id="TIGR01740">
    <property type="entry name" value="pyrF"/>
    <property type="match status" value="1"/>
</dbReference>
<dbReference type="PANTHER" id="PTHR32119">
    <property type="entry name" value="OROTIDINE 5'-PHOSPHATE DECARBOXYLASE"/>
    <property type="match status" value="1"/>
</dbReference>
<dbReference type="PANTHER" id="PTHR32119:SF2">
    <property type="entry name" value="OROTIDINE 5'-PHOSPHATE DECARBOXYLASE"/>
    <property type="match status" value="1"/>
</dbReference>
<dbReference type="Pfam" id="PF00215">
    <property type="entry name" value="OMPdecase"/>
    <property type="match status" value="1"/>
</dbReference>
<dbReference type="SMART" id="SM00934">
    <property type="entry name" value="OMPdecase"/>
    <property type="match status" value="1"/>
</dbReference>
<dbReference type="SUPFAM" id="SSF51366">
    <property type="entry name" value="Ribulose-phoshate binding barrel"/>
    <property type="match status" value="1"/>
</dbReference>
<dbReference type="PROSITE" id="PS00156">
    <property type="entry name" value="OMPDECASE"/>
    <property type="match status" value="1"/>
</dbReference>
<feature type="chain" id="PRO_0000134565" description="Orotidine 5'-phosphate decarboxylase">
    <location>
        <begin position="1"/>
        <end position="232"/>
    </location>
</feature>
<feature type="active site" description="Proton donor" evidence="1">
    <location>
        <position position="64"/>
    </location>
</feature>
<feature type="binding site" evidence="1">
    <location>
        <position position="13"/>
    </location>
    <ligand>
        <name>substrate</name>
    </ligand>
</feature>
<feature type="binding site" evidence="1">
    <location>
        <position position="35"/>
    </location>
    <ligand>
        <name>substrate</name>
    </ligand>
</feature>
<feature type="binding site" evidence="1">
    <location>
        <begin position="62"/>
        <end position="71"/>
    </location>
    <ligand>
        <name>substrate</name>
    </ligand>
</feature>
<feature type="binding site" evidence="1">
    <location>
        <position position="122"/>
    </location>
    <ligand>
        <name>substrate</name>
    </ligand>
</feature>
<feature type="binding site" evidence="1">
    <location>
        <position position="182"/>
    </location>
    <ligand>
        <name>substrate</name>
    </ligand>
</feature>
<feature type="binding site" evidence="1">
    <location>
        <position position="191"/>
    </location>
    <ligand>
        <name>substrate</name>
    </ligand>
</feature>
<feature type="binding site" evidence="1">
    <location>
        <position position="211"/>
    </location>
    <ligand>
        <name>substrate</name>
    </ligand>
</feature>
<feature type="binding site" evidence="1">
    <location>
        <position position="212"/>
    </location>
    <ligand>
        <name>substrate</name>
    </ligand>
</feature>
<feature type="sequence conflict" description="In Ref. 1; CAA46564." evidence="2" ref="1">
    <original>P</original>
    <variation>A</variation>
    <location>
        <position position="111"/>
    </location>
</feature>